<name>CHH1_PENJP</name>
<keyword id="KW-0002">3D-structure</keyword>
<keyword id="KW-0027">Amidation</keyword>
<keyword id="KW-0119">Carbohydrate metabolism</keyword>
<keyword id="KW-0165">Cleavage on pair of basic residues</keyword>
<keyword id="KW-0903">Direct protein sequencing</keyword>
<keyword id="KW-1015">Disulfide bond</keyword>
<keyword id="KW-0313">Glucose metabolism</keyword>
<keyword id="KW-0372">Hormone</keyword>
<keyword id="KW-0527">Neuropeptide</keyword>
<keyword id="KW-0964">Secreted</keyword>
<keyword id="KW-0732">Signal</keyword>
<reference key="1">
    <citation type="book" date="1998" name="Proceedings of the XIII international congress of comparative endocrinology">
        <title>Molecular cloning of cDNAs encoding four crustacean hyperglycemic hormones and a molt-inhibiting hormone from the kuruma prawn Penaeus japonicus.</title>
        <authorList>
            <person name="Ohira T."/>
            <person name="Watanabe T."/>
            <person name="Nagasawa H."/>
            <person name="Aida K."/>
        </authorList>
    </citation>
    <scope>NUCLEOTIDE SEQUENCE [MRNA]</scope>
    <source>
        <tissue>Eyestalk</tissue>
    </source>
</reference>
<reference key="2">
    <citation type="journal article" date="1997" name="Peptides">
        <title>Amino acid sequences and activities of multiple hyperglycemic hormones from the kuruma prawn, Penaeus japonicus.</title>
        <authorList>
            <person name="Yang W.-J."/>
            <person name="Aida K."/>
            <person name="Nagasawa H."/>
        </authorList>
    </citation>
    <scope>PROTEIN SEQUENCE OF 47-118</scope>
    <scope>AMIDATION AT VAL-118</scope>
    <source>
        <tissue>Sinus gland</tissue>
    </source>
</reference>
<reference key="3">
    <citation type="journal article" date="1995" name="Aquaculture">
        <title>Amino acid sequences of a hyperglycaemic hormone and its related peptides from the kuruma prawn, Penaeus japonicus.</title>
        <authorList>
            <person name="Yang W.-J."/>
            <person name="Aida K."/>
            <person name="Nagasawa H."/>
        </authorList>
    </citation>
    <scope>PROTEIN SEQUENCE OF 47-101</scope>
    <source>
        <tissue>Sinus gland</tissue>
    </source>
</reference>
<sequence length="120" mass="13298">MIAFRAVWSALLASLLLLLLAPSASPVDAFSPPEASLTGGQSLSKRSLFDPSCTGVFDRQLLRRLGRVCDDCFNVFREPNVATECRSNCYNNPVFRQCMAYVVPAHLHNEHREAVQMVGK</sequence>
<feature type="signal peptide" evidence="2">
    <location>
        <begin position="1"/>
        <end position="24"/>
    </location>
</feature>
<feature type="peptide" id="PRO_0000019051" description="CHH precursor-related peptide 1">
    <location>
        <begin position="25"/>
        <end position="44"/>
    </location>
</feature>
<feature type="peptide" id="PRO_0000019052" description="Crustacean hyperglycemic hormone 1">
    <location>
        <begin position="47"/>
        <end position="118"/>
    </location>
</feature>
<feature type="modified residue" description="Valine amide" evidence="3">
    <location>
        <position position="118"/>
    </location>
</feature>
<feature type="disulfide bond" evidence="1">
    <location>
        <begin position="53"/>
        <end position="89"/>
    </location>
</feature>
<feature type="disulfide bond" evidence="1">
    <location>
        <begin position="69"/>
        <end position="85"/>
    </location>
</feature>
<feature type="disulfide bond" evidence="1">
    <location>
        <begin position="72"/>
        <end position="98"/>
    </location>
</feature>
<feature type="helix" evidence="5">
    <location>
        <begin position="59"/>
        <end position="72"/>
    </location>
</feature>
<feature type="turn" evidence="5">
    <location>
        <begin position="75"/>
        <end position="77"/>
    </location>
</feature>
<feature type="helix" evidence="5">
    <location>
        <begin position="79"/>
        <end position="86"/>
    </location>
</feature>
<feature type="helix" evidence="5">
    <location>
        <begin position="88"/>
        <end position="90"/>
    </location>
</feature>
<feature type="helix" evidence="5">
    <location>
        <begin position="93"/>
        <end position="107"/>
    </location>
</feature>
<comment type="function">
    <text>Hormone found in the sinus gland of isopods and decapods which controls the blood sugar level. Has a secretagogue action over the amylase released from the midgut gland. May act as a stress hormone and may be involved in the control of molting and reproduction.</text>
</comment>
<comment type="subcellular location">
    <subcellularLocation>
        <location>Secreted</location>
    </subcellularLocation>
</comment>
<comment type="tissue specificity">
    <text>Produced by the medulla terminalis X-organ in the eyestalks and transported to the sinus gland where they are stored and released.</text>
</comment>
<comment type="similarity">
    <text evidence="4">Belongs to the arthropod CHH/MIH/GIH/VIH hormone family.</text>
</comment>
<organism>
    <name type="scientific">Penaeus japonicus</name>
    <name type="common">Kuruma prawn</name>
    <name type="synonym">Marsupenaeus japonicus</name>
    <dbReference type="NCBI Taxonomy" id="27405"/>
    <lineage>
        <taxon>Eukaryota</taxon>
        <taxon>Metazoa</taxon>
        <taxon>Ecdysozoa</taxon>
        <taxon>Arthropoda</taxon>
        <taxon>Crustacea</taxon>
        <taxon>Multicrustacea</taxon>
        <taxon>Malacostraca</taxon>
        <taxon>Eumalacostraca</taxon>
        <taxon>Eucarida</taxon>
        <taxon>Decapoda</taxon>
        <taxon>Dendrobranchiata</taxon>
        <taxon>Penaeoidea</taxon>
        <taxon>Penaeidae</taxon>
        <taxon>Penaeus</taxon>
    </lineage>
</organism>
<accession>O15980</accession>
<proteinExistence type="evidence at protein level"/>
<protein>
    <recommendedName>
        <fullName>Crustacean hyperglycemic hormones 1</fullName>
    </recommendedName>
    <alternativeName>
        <fullName>Pej-SGP-I</fullName>
    </alternativeName>
    <component>
        <recommendedName>
            <fullName>CHH precursor-related peptide 1</fullName>
            <shortName>CPRP 1</shortName>
        </recommendedName>
    </component>
    <component>
        <recommendedName>
            <fullName>Crustacean hyperglycemic hormone 1</fullName>
            <shortName>CHH 1</shortName>
        </recommendedName>
    </component>
</protein>
<dbReference type="EMBL" id="AB007507">
    <property type="protein sequence ID" value="BAA22560.1"/>
    <property type="molecule type" value="mRNA"/>
</dbReference>
<dbReference type="RefSeq" id="XP_042876068.1">
    <property type="nucleotide sequence ID" value="XM_043020134.1"/>
</dbReference>
<dbReference type="PDB" id="5B5I">
    <property type="method" value="X-ray"/>
    <property type="resolution" value="1.60 A"/>
    <property type="chains" value="A/B=47-119"/>
</dbReference>
<dbReference type="PDBsum" id="5B5I"/>
<dbReference type="SMR" id="O15980"/>
<dbReference type="EnsemblMetazoa" id="XM_043020134.1">
    <property type="protein sequence ID" value="XP_042876068.1"/>
    <property type="gene ID" value="LOC122255815"/>
</dbReference>
<dbReference type="GeneID" id="122255815"/>
<dbReference type="OrthoDB" id="6365952at2759"/>
<dbReference type="GO" id="GO:0005576">
    <property type="term" value="C:extracellular region"/>
    <property type="evidence" value="ECO:0007669"/>
    <property type="project" value="UniProtKB-SubCell"/>
</dbReference>
<dbReference type="GO" id="GO:0005184">
    <property type="term" value="F:neuropeptide hormone activity"/>
    <property type="evidence" value="ECO:0007669"/>
    <property type="project" value="InterPro"/>
</dbReference>
<dbReference type="GO" id="GO:0007623">
    <property type="term" value="P:circadian rhythm"/>
    <property type="evidence" value="ECO:0007669"/>
    <property type="project" value="TreeGrafter"/>
</dbReference>
<dbReference type="GO" id="GO:0006006">
    <property type="term" value="P:glucose metabolic process"/>
    <property type="evidence" value="ECO:0007669"/>
    <property type="project" value="UniProtKB-KW"/>
</dbReference>
<dbReference type="GO" id="GO:0007218">
    <property type="term" value="P:neuropeptide signaling pathway"/>
    <property type="evidence" value="ECO:0007669"/>
    <property type="project" value="UniProtKB-KW"/>
</dbReference>
<dbReference type="Gene3D" id="1.10.2010.10">
    <property type="entry name" value="Crustacean CHH/MIH/GIH neurohormone"/>
    <property type="match status" value="1"/>
</dbReference>
<dbReference type="InterPro" id="IPR018251">
    <property type="entry name" value="Crust_neurhormone_CS"/>
</dbReference>
<dbReference type="InterPro" id="IPR031098">
    <property type="entry name" value="Crust_neurohorm"/>
</dbReference>
<dbReference type="InterPro" id="IPR035957">
    <property type="entry name" value="Crust_neurohorm_sf"/>
</dbReference>
<dbReference type="InterPro" id="IPR001166">
    <property type="entry name" value="Hyperglycemic"/>
</dbReference>
<dbReference type="InterPro" id="IPR000346">
    <property type="entry name" value="Hyperglycemic1"/>
</dbReference>
<dbReference type="PANTHER" id="PTHR35981">
    <property type="entry name" value="ION TRANSPORT PEPTIDE, ISOFORM C"/>
    <property type="match status" value="1"/>
</dbReference>
<dbReference type="PANTHER" id="PTHR35981:SF2">
    <property type="entry name" value="ION TRANSPORT PEPTIDE, ISOFORM C"/>
    <property type="match status" value="1"/>
</dbReference>
<dbReference type="Pfam" id="PF01147">
    <property type="entry name" value="Crust_neurohorm"/>
    <property type="match status" value="1"/>
</dbReference>
<dbReference type="PRINTS" id="PR00548">
    <property type="entry name" value="HYPRGLYCEMC1"/>
</dbReference>
<dbReference type="PRINTS" id="PR00550">
    <property type="entry name" value="HYPRGLYCEMIC"/>
</dbReference>
<dbReference type="SUPFAM" id="SSF81778">
    <property type="entry name" value="Crustacean CHH/MIH/GIH neurohormone"/>
    <property type="match status" value="1"/>
</dbReference>
<dbReference type="PROSITE" id="PS01250">
    <property type="entry name" value="CHH_MIH_GIH"/>
    <property type="match status" value="1"/>
</dbReference>
<evidence type="ECO:0000250" key="1"/>
<evidence type="ECO:0000255" key="2"/>
<evidence type="ECO:0000269" key="3">
    <source>
    </source>
</evidence>
<evidence type="ECO:0000305" key="4"/>
<evidence type="ECO:0007829" key="5">
    <source>
        <dbReference type="PDB" id="5B5I"/>
    </source>
</evidence>